<dbReference type="EMBL" id="CP000951">
    <property type="protein sequence ID" value="ACA99063.1"/>
    <property type="molecule type" value="Genomic_DNA"/>
</dbReference>
<dbReference type="RefSeq" id="WP_012306686.1">
    <property type="nucleotide sequence ID" value="NZ_JAHHPU010000001.1"/>
</dbReference>
<dbReference type="SMR" id="B1XJT5"/>
<dbReference type="STRING" id="32049.SYNPCC7002_A1061"/>
<dbReference type="KEGG" id="syp:SYNPCC7002_A1061"/>
<dbReference type="eggNOG" id="COG0185">
    <property type="taxonomic scope" value="Bacteria"/>
</dbReference>
<dbReference type="HOGENOM" id="CLU_144911_0_1_3"/>
<dbReference type="Proteomes" id="UP000001688">
    <property type="component" value="Chromosome"/>
</dbReference>
<dbReference type="GO" id="GO:0005737">
    <property type="term" value="C:cytoplasm"/>
    <property type="evidence" value="ECO:0007669"/>
    <property type="project" value="UniProtKB-ARBA"/>
</dbReference>
<dbReference type="GO" id="GO:0015935">
    <property type="term" value="C:small ribosomal subunit"/>
    <property type="evidence" value="ECO:0007669"/>
    <property type="project" value="InterPro"/>
</dbReference>
<dbReference type="GO" id="GO:0019843">
    <property type="term" value="F:rRNA binding"/>
    <property type="evidence" value="ECO:0007669"/>
    <property type="project" value="UniProtKB-UniRule"/>
</dbReference>
<dbReference type="GO" id="GO:0003735">
    <property type="term" value="F:structural constituent of ribosome"/>
    <property type="evidence" value="ECO:0007669"/>
    <property type="project" value="InterPro"/>
</dbReference>
<dbReference type="GO" id="GO:0000028">
    <property type="term" value="P:ribosomal small subunit assembly"/>
    <property type="evidence" value="ECO:0007669"/>
    <property type="project" value="TreeGrafter"/>
</dbReference>
<dbReference type="GO" id="GO:0006412">
    <property type="term" value="P:translation"/>
    <property type="evidence" value="ECO:0007669"/>
    <property type="project" value="UniProtKB-UniRule"/>
</dbReference>
<dbReference type="FunFam" id="3.30.860.10:FF:000001">
    <property type="entry name" value="30S ribosomal protein S19"/>
    <property type="match status" value="1"/>
</dbReference>
<dbReference type="Gene3D" id="3.30.860.10">
    <property type="entry name" value="30s Ribosomal Protein S19, Chain A"/>
    <property type="match status" value="1"/>
</dbReference>
<dbReference type="HAMAP" id="MF_00531">
    <property type="entry name" value="Ribosomal_uS19"/>
    <property type="match status" value="1"/>
</dbReference>
<dbReference type="InterPro" id="IPR002222">
    <property type="entry name" value="Ribosomal_uS19"/>
</dbReference>
<dbReference type="InterPro" id="IPR005732">
    <property type="entry name" value="Ribosomal_uS19_bac-type"/>
</dbReference>
<dbReference type="InterPro" id="IPR020934">
    <property type="entry name" value="Ribosomal_uS19_CS"/>
</dbReference>
<dbReference type="InterPro" id="IPR023575">
    <property type="entry name" value="Ribosomal_uS19_SF"/>
</dbReference>
<dbReference type="NCBIfam" id="TIGR01050">
    <property type="entry name" value="rpsS_bact"/>
    <property type="match status" value="1"/>
</dbReference>
<dbReference type="PANTHER" id="PTHR11880">
    <property type="entry name" value="RIBOSOMAL PROTEIN S19P FAMILY MEMBER"/>
    <property type="match status" value="1"/>
</dbReference>
<dbReference type="PANTHER" id="PTHR11880:SF8">
    <property type="entry name" value="SMALL RIBOSOMAL SUBUNIT PROTEIN US19M"/>
    <property type="match status" value="1"/>
</dbReference>
<dbReference type="Pfam" id="PF00203">
    <property type="entry name" value="Ribosomal_S19"/>
    <property type="match status" value="1"/>
</dbReference>
<dbReference type="PIRSF" id="PIRSF002144">
    <property type="entry name" value="Ribosomal_S19"/>
    <property type="match status" value="1"/>
</dbReference>
<dbReference type="PRINTS" id="PR00975">
    <property type="entry name" value="RIBOSOMALS19"/>
</dbReference>
<dbReference type="SUPFAM" id="SSF54570">
    <property type="entry name" value="Ribosomal protein S19"/>
    <property type="match status" value="1"/>
</dbReference>
<dbReference type="PROSITE" id="PS00323">
    <property type="entry name" value="RIBOSOMAL_S19"/>
    <property type="match status" value="1"/>
</dbReference>
<name>RS19_PICP2</name>
<reference key="1">
    <citation type="submission" date="2008-02" db="EMBL/GenBank/DDBJ databases">
        <title>Complete sequence of Synechococcus sp. PCC 7002.</title>
        <authorList>
            <person name="Li T."/>
            <person name="Zhao J."/>
            <person name="Zhao C."/>
            <person name="Liu Z."/>
            <person name="Zhao F."/>
            <person name="Marquardt J."/>
            <person name="Nomura C.T."/>
            <person name="Persson S."/>
            <person name="Detter J.C."/>
            <person name="Richardson P.M."/>
            <person name="Lanz C."/>
            <person name="Schuster S.C."/>
            <person name="Wang J."/>
            <person name="Li S."/>
            <person name="Huang X."/>
            <person name="Cai T."/>
            <person name="Yu Z."/>
            <person name="Luo J."/>
            <person name="Zhao J."/>
            <person name="Bryant D.A."/>
        </authorList>
    </citation>
    <scope>NUCLEOTIDE SEQUENCE [LARGE SCALE GENOMIC DNA]</scope>
    <source>
        <strain>ATCC 27264 / PCC 7002 / PR-6</strain>
    </source>
</reference>
<sequence length="92" mass="10217">MGRSLKKGPFIADSLLKKIEKLNASGDKQVIKTWSRASTILPQMVGHTIAVHNGRQHVPVFVSEQMVGHKLGEFAPTRTFKGHAKSDKKARR</sequence>
<comment type="function">
    <text evidence="1">Protein S19 forms a complex with S13 that binds strongly to the 16S ribosomal RNA.</text>
</comment>
<comment type="similarity">
    <text evidence="1">Belongs to the universal ribosomal protein uS19 family.</text>
</comment>
<gene>
    <name evidence="1" type="primary">rpsS</name>
    <name evidence="1" type="synonym">rps19</name>
    <name type="ordered locus">SYNPCC7002_A1061</name>
</gene>
<feature type="chain" id="PRO_1000128046" description="Small ribosomal subunit protein uS19">
    <location>
        <begin position="1"/>
        <end position="92"/>
    </location>
</feature>
<keyword id="KW-1185">Reference proteome</keyword>
<keyword id="KW-0687">Ribonucleoprotein</keyword>
<keyword id="KW-0689">Ribosomal protein</keyword>
<keyword id="KW-0694">RNA-binding</keyword>
<keyword id="KW-0699">rRNA-binding</keyword>
<proteinExistence type="inferred from homology"/>
<organism>
    <name type="scientific">Picosynechococcus sp. (strain ATCC 27264 / PCC 7002 / PR-6)</name>
    <name type="common">Agmenellum quadruplicatum</name>
    <dbReference type="NCBI Taxonomy" id="32049"/>
    <lineage>
        <taxon>Bacteria</taxon>
        <taxon>Bacillati</taxon>
        <taxon>Cyanobacteriota</taxon>
        <taxon>Cyanophyceae</taxon>
        <taxon>Oscillatoriophycideae</taxon>
        <taxon>Chroococcales</taxon>
        <taxon>Geminocystaceae</taxon>
        <taxon>Picosynechococcus</taxon>
    </lineage>
</organism>
<accession>B1XJT5</accession>
<protein>
    <recommendedName>
        <fullName evidence="1">Small ribosomal subunit protein uS19</fullName>
    </recommendedName>
    <alternativeName>
        <fullName evidence="2">30S ribosomal protein S19</fullName>
    </alternativeName>
</protein>
<evidence type="ECO:0000255" key="1">
    <source>
        <dbReference type="HAMAP-Rule" id="MF_00531"/>
    </source>
</evidence>
<evidence type="ECO:0000305" key="2"/>